<accession>Q4PR49</accession>
<accession>Q9SNH7</accession>
<dbReference type="EMBL" id="AP000616">
    <property type="protein sequence ID" value="BAA85432.1"/>
    <property type="molecule type" value="Genomic_DNA"/>
</dbReference>
<dbReference type="EMBL" id="AP014962">
    <property type="status" value="NOT_ANNOTATED_CDS"/>
    <property type="molecule type" value="Genomic_DNA"/>
</dbReference>
<dbReference type="EMBL" id="DQ061058">
    <property type="protein sequence ID" value="AAY63549.1"/>
    <property type="molecule type" value="mRNA"/>
</dbReference>
<dbReference type="RefSeq" id="XP_015642083.1">
    <property type="nucleotide sequence ID" value="XM_015786597.1"/>
</dbReference>
<dbReference type="SMR" id="Q4PR49"/>
<dbReference type="STRING" id="39947.Q4PR49"/>
<dbReference type="PaxDb" id="39947-Q4PR49"/>
<dbReference type="eggNOG" id="ENOG502QR2X">
    <property type="taxonomic scope" value="Eukaryota"/>
</dbReference>
<dbReference type="HOGENOM" id="CLU_027462_0_0_1"/>
<dbReference type="InParanoid" id="Q4PR49"/>
<dbReference type="OrthoDB" id="5823761at2759"/>
<dbReference type="PlantReactome" id="R-OSA-9639861">
    <property type="pathway name" value="Development of root hair"/>
</dbReference>
<dbReference type="Proteomes" id="UP000000763">
    <property type="component" value="Chromosome 6"/>
</dbReference>
<dbReference type="Proteomes" id="UP000059680">
    <property type="component" value="Chromosome 6"/>
</dbReference>
<dbReference type="GO" id="GO:0005576">
    <property type="term" value="C:extracellular region"/>
    <property type="evidence" value="ECO:0007669"/>
    <property type="project" value="UniProtKB-KW"/>
</dbReference>
<dbReference type="GO" id="GO:0016020">
    <property type="term" value="C:membrane"/>
    <property type="evidence" value="ECO:0007669"/>
    <property type="project" value="UniProtKB-SubCell"/>
</dbReference>
<dbReference type="GO" id="GO:0009828">
    <property type="term" value="P:plant-type cell wall loosening"/>
    <property type="evidence" value="ECO:0000250"/>
    <property type="project" value="UniProtKB"/>
</dbReference>
<dbReference type="CDD" id="cd22274">
    <property type="entry name" value="DPBB_EXPA_N"/>
    <property type="match status" value="1"/>
</dbReference>
<dbReference type="Gene3D" id="2.60.40.760">
    <property type="entry name" value="Expansin, cellulose-binding-like domain"/>
    <property type="match status" value="1"/>
</dbReference>
<dbReference type="Gene3D" id="2.40.40.10">
    <property type="entry name" value="RlpA-like domain"/>
    <property type="match status" value="1"/>
</dbReference>
<dbReference type="InterPro" id="IPR007118">
    <property type="entry name" value="Expan_Lol_pI"/>
</dbReference>
<dbReference type="InterPro" id="IPR002963">
    <property type="entry name" value="Expansin"/>
</dbReference>
<dbReference type="InterPro" id="IPR007112">
    <property type="entry name" value="Expansin/allergen_DPBB_dom"/>
</dbReference>
<dbReference type="InterPro" id="IPR007117">
    <property type="entry name" value="Expansin_CBD"/>
</dbReference>
<dbReference type="InterPro" id="IPR036749">
    <property type="entry name" value="Expansin_CBD_sf"/>
</dbReference>
<dbReference type="InterPro" id="IPR009009">
    <property type="entry name" value="RlpA-like_DPBB"/>
</dbReference>
<dbReference type="InterPro" id="IPR036908">
    <property type="entry name" value="RlpA-like_sf"/>
</dbReference>
<dbReference type="PANTHER" id="PTHR31867">
    <property type="entry name" value="EXPANSIN-A15"/>
    <property type="match status" value="1"/>
</dbReference>
<dbReference type="Pfam" id="PF03330">
    <property type="entry name" value="DPBB_1"/>
    <property type="match status" value="1"/>
</dbReference>
<dbReference type="Pfam" id="PF01357">
    <property type="entry name" value="Expansin_C"/>
    <property type="match status" value="1"/>
</dbReference>
<dbReference type="PRINTS" id="PR01226">
    <property type="entry name" value="EXPANSIN"/>
</dbReference>
<dbReference type="PRINTS" id="PR01225">
    <property type="entry name" value="EXPANSNFAMLY"/>
</dbReference>
<dbReference type="SMART" id="SM00837">
    <property type="entry name" value="DPBB_1"/>
    <property type="match status" value="1"/>
</dbReference>
<dbReference type="SUPFAM" id="SSF50685">
    <property type="entry name" value="Barwin-like endoglucanases"/>
    <property type="match status" value="1"/>
</dbReference>
<dbReference type="SUPFAM" id="SSF49590">
    <property type="entry name" value="PHL pollen allergen"/>
    <property type="match status" value="1"/>
</dbReference>
<dbReference type="PROSITE" id="PS50843">
    <property type="entry name" value="EXPANSIN_CBD"/>
    <property type="match status" value="1"/>
</dbReference>
<dbReference type="PROSITE" id="PS50842">
    <property type="entry name" value="EXPANSIN_EG45"/>
    <property type="match status" value="1"/>
</dbReference>
<proteinExistence type="evidence at transcript level"/>
<gene>
    <name type="primary">EXPA17</name>
    <name type="synonym">EXP17</name>
    <name type="ordered locus">Os06g0108600</name>
    <name type="ordered locus">LOC_Os06g01920</name>
    <name type="ORF">P0514G12.20</name>
</gene>
<name>EXP17_ORYSJ</name>
<feature type="signal peptide" evidence="2">
    <location>
        <begin position="1"/>
        <end position="21"/>
    </location>
</feature>
<feature type="chain" id="PRO_0000251996" description="Expansin-A17">
    <location>
        <begin position="22"/>
        <end position="284"/>
    </location>
</feature>
<feature type="domain" description="Expansin-like EG45" evidence="4">
    <location>
        <begin position="71"/>
        <end position="185"/>
    </location>
</feature>
<feature type="domain" description="Expansin-like CBD" evidence="3">
    <location>
        <begin position="195"/>
        <end position="279"/>
    </location>
</feature>
<keyword id="KW-0134">Cell wall</keyword>
<keyword id="KW-0961">Cell wall biogenesis/degradation</keyword>
<keyword id="KW-0472">Membrane</keyword>
<keyword id="KW-1185">Reference proteome</keyword>
<keyword id="KW-0964">Secreted</keyword>
<keyword id="KW-0732">Signal</keyword>
<reference key="1">
    <citation type="journal article" date="2005" name="Nature">
        <title>The map-based sequence of the rice genome.</title>
        <authorList>
            <consortium name="International rice genome sequencing project (IRGSP)"/>
        </authorList>
    </citation>
    <scope>NUCLEOTIDE SEQUENCE [LARGE SCALE GENOMIC DNA]</scope>
    <source>
        <strain>cv. Nipponbare</strain>
    </source>
</reference>
<reference key="2">
    <citation type="journal article" date="2013" name="Rice">
        <title>Improvement of the Oryza sativa Nipponbare reference genome using next generation sequence and optical map data.</title>
        <authorList>
            <person name="Kawahara Y."/>
            <person name="de la Bastide M."/>
            <person name="Hamilton J.P."/>
            <person name="Kanamori H."/>
            <person name="McCombie W.R."/>
            <person name="Ouyang S."/>
            <person name="Schwartz D.C."/>
            <person name="Tanaka T."/>
            <person name="Wu J."/>
            <person name="Zhou S."/>
            <person name="Childs K.L."/>
            <person name="Davidson R.M."/>
            <person name="Lin H."/>
            <person name="Quesada-Ocampo L."/>
            <person name="Vaillancourt B."/>
            <person name="Sakai H."/>
            <person name="Lee S.S."/>
            <person name="Kim J."/>
            <person name="Numa H."/>
            <person name="Itoh T."/>
            <person name="Buell C.R."/>
            <person name="Matsumoto T."/>
        </authorList>
    </citation>
    <scope>GENOME REANNOTATION</scope>
    <source>
        <strain>cv. Nipponbare</strain>
    </source>
</reference>
<reference key="3">
    <citation type="journal article" date="2005" name="Mol. Cells">
        <title>Characterization and transcriptional expression of the alpha-expansin gene family in rice.</title>
        <authorList>
            <person name="Shin J.-H."/>
            <person name="Jeong D.-H."/>
            <person name="Park M.C."/>
            <person name="An G."/>
        </authorList>
    </citation>
    <scope>NUCLEOTIDE SEQUENCE [MRNA] OF 6-274</scope>
    <source>
        <strain>cv. Dongjin</strain>
    </source>
</reference>
<reference key="4">
    <citation type="journal article" date="2002" name="Plant Physiol.">
        <title>Expression of alpha-expansin and expansin-like genes in deepwater rice.</title>
        <authorList>
            <person name="Lee Y."/>
            <person name="Kende H."/>
        </authorList>
    </citation>
    <scope>TISSUE SPECIFICITY</scope>
</reference>
<reference key="5">
    <citation type="journal article" date="2004" name="Plant Mol. Biol.">
        <title>Nomenclature for members of the expansin superfamily of genes and proteins.</title>
        <authorList>
            <person name="Kende H."/>
            <person name="Bradford K.J."/>
            <person name="Brummell D.A."/>
            <person name="Cho H.-T."/>
            <person name="Cosgrove D.J."/>
            <person name="Fleming A.J."/>
            <person name="Gehring C."/>
            <person name="Lee Y."/>
            <person name="McQueen-Mason S.J."/>
            <person name="Rose J.K.C."/>
            <person name="Voesenek L.A.C."/>
        </authorList>
    </citation>
    <scope>NOMENCLATURE</scope>
</reference>
<organism>
    <name type="scientific">Oryza sativa subsp. japonica</name>
    <name type="common">Rice</name>
    <dbReference type="NCBI Taxonomy" id="39947"/>
    <lineage>
        <taxon>Eukaryota</taxon>
        <taxon>Viridiplantae</taxon>
        <taxon>Streptophyta</taxon>
        <taxon>Embryophyta</taxon>
        <taxon>Tracheophyta</taxon>
        <taxon>Spermatophyta</taxon>
        <taxon>Magnoliopsida</taxon>
        <taxon>Liliopsida</taxon>
        <taxon>Poales</taxon>
        <taxon>Poaceae</taxon>
        <taxon>BOP clade</taxon>
        <taxon>Oryzoideae</taxon>
        <taxon>Oryzeae</taxon>
        <taxon>Oryzinae</taxon>
        <taxon>Oryza</taxon>
        <taxon>Oryza sativa</taxon>
    </lineage>
</organism>
<comment type="function">
    <text evidence="1">May cause loosening and extension of plant cell walls by disrupting non-covalent bonding between cellulose microfibrils and matrix glucans. No enzymatic activity has been found. May be required for rapid internodal elongation in deepwater rice during submergence (By similarity).</text>
</comment>
<comment type="subcellular location">
    <subcellularLocation>
        <location evidence="1">Secreted</location>
        <location evidence="1">Cell wall</location>
    </subcellularLocation>
    <subcellularLocation>
        <location evidence="1">Membrane</location>
        <topology evidence="1">Peripheral membrane protein</topology>
    </subcellularLocation>
</comment>
<comment type="tissue specificity">
    <text evidence="5">Expressed in roots.</text>
</comment>
<comment type="similarity">
    <text evidence="6">Belongs to the expansin family. Expansin A subfamily.</text>
</comment>
<comment type="online information" name="EXPANSIN homepage">
    <link uri="https://www.dept.psu.edu/biology/groups/expansins/index.htm"/>
</comment>
<protein>
    <recommendedName>
        <fullName>Expansin-A17</fullName>
    </recommendedName>
    <alternativeName>
        <fullName>Alpha-expansin-17</fullName>
    </alternativeName>
    <alternativeName>
        <fullName>OsEXP17</fullName>
    </alternativeName>
    <alternativeName>
        <fullName>OsEXPA17</fullName>
    </alternativeName>
    <alternativeName>
        <fullName>OsaEXPa1.31</fullName>
    </alternativeName>
</protein>
<sequence length="284" mass="30433">MASSWNNPAIFLAAALAVATAAQVVTAGFTTDLYWQQQPAPGAVTPYKTSDWHDGSATFYGDPSGMGDDFGGACGYVSNDIVSLYSTKTAALSTPLFADGNGCGQCYELRCVKSPWCNPGSPSVVITGTNLCPPNWYLPNDDGGWCNPPRHHFDMAPPSFLKLAQRVAGIVPVQYRRVPCQRTGGVRFCLQGNHYWLLLYVMNVGGAGDVSSLSVKTSGGGGAWIQAAHNWGITYQVFAALDNSDGLTVKLTTYSTPQQTIIVSDAISPWWITGLCYQGSNNFY</sequence>
<evidence type="ECO:0000250" key="1"/>
<evidence type="ECO:0000255" key="2"/>
<evidence type="ECO:0000255" key="3">
    <source>
        <dbReference type="PROSITE-ProRule" id="PRU00078"/>
    </source>
</evidence>
<evidence type="ECO:0000255" key="4">
    <source>
        <dbReference type="PROSITE-ProRule" id="PRU00079"/>
    </source>
</evidence>
<evidence type="ECO:0000269" key="5">
    <source>
    </source>
</evidence>
<evidence type="ECO:0000305" key="6"/>